<comment type="function">
    <text evidence="1">Putative transporter.</text>
</comment>
<comment type="interaction">
    <interactant intactId="EBI-720094">
        <id>Q96K37</id>
    </interactant>
    <interactant intactId="EBI-12156897">
        <id>Q9BXU8</id>
        <label>FTHL17</label>
    </interactant>
    <organismsDiffer>false</organismsDiffer>
    <experiments>3</experiments>
</comment>
<comment type="interaction">
    <interactant intactId="EBI-720094">
        <id>Q96K37</id>
    </interactant>
    <interactant intactId="EBI-711788">
        <id>Q00013</id>
        <label>MPP1</label>
    </interactant>
    <organismsDiffer>false</organismsDiffer>
    <experiments>3</experiments>
</comment>
<comment type="subcellular location">
    <subcellularLocation>
        <location evidence="5">Membrane</location>
        <topology evidence="5">Multi-pass membrane protein</topology>
    </subcellularLocation>
</comment>
<comment type="alternative products">
    <event type="alternative splicing"/>
    <isoform>
        <id>Q96K37-1</id>
        <name>1</name>
        <sequence type="displayed"/>
    </isoform>
    <isoform>
        <id>Q96K37-2</id>
        <name>2</name>
        <sequence type="described" ref="VSP_010139"/>
    </isoform>
    <isoform>
        <id>Q96K37-3</id>
        <name>3</name>
        <sequence type="described" ref="VSP_031351 VSP_010140 VSP_010141"/>
    </isoform>
</comment>
<comment type="similarity">
    <text evidence="5">Belongs to the TPT transporter family. SLC35E subfamily.</text>
</comment>
<comment type="sequence caution" evidence="5">
    <conflict type="frameshift">
        <sequence resource="EMBL-CDS" id="AAH14557"/>
    </conflict>
</comment>
<comment type="sequence caution" evidence="5">
    <conflict type="erroneous initiation">
        <sequence resource="EMBL-CDS" id="AAH62562"/>
    </conflict>
</comment>
<comment type="sequence caution" evidence="5">
    <conflict type="erroneous initiation">
        <sequence resource="EMBL-CDS" id="BAB55306"/>
    </conflict>
</comment>
<comment type="sequence caution" evidence="5">
    <conflict type="erroneous initiation">
        <sequence resource="EMBL-CDS" id="BAB55410"/>
    </conflict>
</comment>
<comment type="sequence caution" evidence="5">
    <conflict type="erroneous initiation">
        <sequence resource="EMBL-CDS" id="BAC11565"/>
    </conflict>
</comment>
<keyword id="KW-0025">Alternative splicing</keyword>
<keyword id="KW-0472">Membrane</keyword>
<keyword id="KW-0597">Phosphoprotein</keyword>
<keyword id="KW-1267">Proteomics identification</keyword>
<keyword id="KW-1185">Reference proteome</keyword>
<keyword id="KW-0812">Transmembrane</keyword>
<keyword id="KW-1133">Transmembrane helix</keyword>
<keyword id="KW-0813">Transport</keyword>
<accession>Q96K37</accession>
<accession>Q8NBQ2</accession>
<accession>Q96JV7</accession>
<gene>
    <name type="primary">SLC35E1</name>
    <name type="ORF">PSEC0038</name>
</gene>
<reference key="1">
    <citation type="journal article" date="2007" name="BMC Genomics">
        <title>The full-ORF clone resource of the German cDNA consortium.</title>
        <authorList>
            <person name="Bechtel S."/>
            <person name="Rosenfelder H."/>
            <person name="Duda A."/>
            <person name="Schmidt C.P."/>
            <person name="Ernst U."/>
            <person name="Wellenreuther R."/>
            <person name="Mehrle A."/>
            <person name="Schuster C."/>
            <person name="Bahr A."/>
            <person name="Bloecker H."/>
            <person name="Heubner D."/>
            <person name="Hoerlein A."/>
            <person name="Michel G."/>
            <person name="Wedler H."/>
            <person name="Koehrer K."/>
            <person name="Ottenwaelder B."/>
            <person name="Poustka A."/>
            <person name="Wiemann S."/>
            <person name="Schupp I."/>
        </authorList>
    </citation>
    <scope>NUCLEOTIDE SEQUENCE [LARGE SCALE MRNA] (ISOFORM 3)</scope>
    <source>
        <tissue>Rectum tumor</tissue>
    </source>
</reference>
<reference key="2">
    <citation type="journal article" date="2004" name="Genome Res.">
        <title>The status, quality, and expansion of the NIH full-length cDNA project: the Mammalian Gene Collection (MGC).</title>
        <authorList>
            <consortium name="The MGC Project Team"/>
        </authorList>
    </citation>
    <scope>NUCLEOTIDE SEQUENCE [LARGE SCALE MRNA] (ISOFORMS 1 AND 2)</scope>
    <source>
        <tissue>Ovary</tissue>
    </source>
</reference>
<reference key="3">
    <citation type="journal article" date="2004" name="Nat. Genet.">
        <title>Complete sequencing and characterization of 21,243 full-length human cDNAs.</title>
        <authorList>
            <person name="Ota T."/>
            <person name="Suzuki Y."/>
            <person name="Nishikawa T."/>
            <person name="Otsuki T."/>
            <person name="Sugiyama T."/>
            <person name="Irie R."/>
            <person name="Wakamatsu A."/>
            <person name="Hayashi K."/>
            <person name="Sato H."/>
            <person name="Nagai K."/>
            <person name="Kimura K."/>
            <person name="Makita H."/>
            <person name="Sekine M."/>
            <person name="Obayashi M."/>
            <person name="Nishi T."/>
            <person name="Shibahara T."/>
            <person name="Tanaka T."/>
            <person name="Ishii S."/>
            <person name="Yamamoto J."/>
            <person name="Saito K."/>
            <person name="Kawai Y."/>
            <person name="Isono Y."/>
            <person name="Nakamura Y."/>
            <person name="Nagahari K."/>
            <person name="Murakami K."/>
            <person name="Yasuda T."/>
            <person name="Iwayanagi T."/>
            <person name="Wagatsuma M."/>
            <person name="Shiratori A."/>
            <person name="Sudo H."/>
            <person name="Hosoiri T."/>
            <person name="Kaku Y."/>
            <person name="Kodaira H."/>
            <person name="Kondo H."/>
            <person name="Sugawara M."/>
            <person name="Takahashi M."/>
            <person name="Kanda K."/>
            <person name="Yokoi T."/>
            <person name="Furuya T."/>
            <person name="Kikkawa E."/>
            <person name="Omura Y."/>
            <person name="Abe K."/>
            <person name="Kamihara K."/>
            <person name="Katsuta N."/>
            <person name="Sato K."/>
            <person name="Tanikawa M."/>
            <person name="Yamazaki M."/>
            <person name="Ninomiya K."/>
            <person name="Ishibashi T."/>
            <person name="Yamashita H."/>
            <person name="Murakawa K."/>
            <person name="Fujimori K."/>
            <person name="Tanai H."/>
            <person name="Kimata M."/>
            <person name="Watanabe M."/>
            <person name="Hiraoka S."/>
            <person name="Chiba Y."/>
            <person name="Ishida S."/>
            <person name="Ono Y."/>
            <person name="Takiguchi S."/>
            <person name="Watanabe S."/>
            <person name="Yosida M."/>
            <person name="Hotuta T."/>
            <person name="Kusano J."/>
            <person name="Kanehori K."/>
            <person name="Takahashi-Fujii A."/>
            <person name="Hara H."/>
            <person name="Tanase T.-O."/>
            <person name="Nomura Y."/>
            <person name="Togiya S."/>
            <person name="Komai F."/>
            <person name="Hara R."/>
            <person name="Takeuchi K."/>
            <person name="Arita M."/>
            <person name="Imose N."/>
            <person name="Musashino K."/>
            <person name="Yuuki H."/>
            <person name="Oshima A."/>
            <person name="Sasaki N."/>
            <person name="Aotsuka S."/>
            <person name="Yoshikawa Y."/>
            <person name="Matsunawa H."/>
            <person name="Ichihara T."/>
            <person name="Shiohata N."/>
            <person name="Sano S."/>
            <person name="Moriya S."/>
            <person name="Momiyama H."/>
            <person name="Satoh N."/>
            <person name="Takami S."/>
            <person name="Terashima Y."/>
            <person name="Suzuki O."/>
            <person name="Nakagawa S."/>
            <person name="Senoh A."/>
            <person name="Mizoguchi H."/>
            <person name="Goto Y."/>
            <person name="Shimizu F."/>
            <person name="Wakebe H."/>
            <person name="Hishigaki H."/>
            <person name="Watanabe T."/>
            <person name="Sugiyama A."/>
            <person name="Takemoto M."/>
            <person name="Kawakami B."/>
            <person name="Yamazaki M."/>
            <person name="Watanabe K."/>
            <person name="Kumagai A."/>
            <person name="Itakura S."/>
            <person name="Fukuzumi Y."/>
            <person name="Fujimori Y."/>
            <person name="Komiyama M."/>
            <person name="Tashiro H."/>
            <person name="Tanigami A."/>
            <person name="Fujiwara T."/>
            <person name="Ono T."/>
            <person name="Yamada K."/>
            <person name="Fujii Y."/>
            <person name="Ozaki K."/>
            <person name="Hirao M."/>
            <person name="Ohmori Y."/>
            <person name="Kawabata A."/>
            <person name="Hikiji T."/>
            <person name="Kobatake N."/>
            <person name="Inagaki H."/>
            <person name="Ikema Y."/>
            <person name="Okamoto S."/>
            <person name="Okitani R."/>
            <person name="Kawakami T."/>
            <person name="Noguchi S."/>
            <person name="Itoh T."/>
            <person name="Shigeta K."/>
            <person name="Senba T."/>
            <person name="Matsumura K."/>
            <person name="Nakajima Y."/>
            <person name="Mizuno T."/>
            <person name="Morinaga M."/>
            <person name="Sasaki M."/>
            <person name="Togashi T."/>
            <person name="Oyama M."/>
            <person name="Hata H."/>
            <person name="Watanabe M."/>
            <person name="Komatsu T."/>
            <person name="Mizushima-Sugano J."/>
            <person name="Satoh T."/>
            <person name="Shirai Y."/>
            <person name="Takahashi Y."/>
            <person name="Nakagawa K."/>
            <person name="Okumura K."/>
            <person name="Nagase T."/>
            <person name="Nomura N."/>
            <person name="Kikuchi H."/>
            <person name="Masuho Y."/>
            <person name="Yamashita R."/>
            <person name="Nakai K."/>
            <person name="Yada T."/>
            <person name="Nakamura Y."/>
            <person name="Ohara O."/>
            <person name="Isogai T."/>
            <person name="Sugano S."/>
        </authorList>
    </citation>
    <scope>NUCLEOTIDE SEQUENCE [LARGE SCALE MRNA] OF 64-410 (ISOFORM 1)</scope>
</reference>
<reference key="4">
    <citation type="journal article" date="2005" name="DNA Res.">
        <title>Signal sequence and keyword trap in silico for selection of full-length human cDNAs encoding secretion or membrane proteins from oligo-capped cDNA libraries.</title>
        <authorList>
            <person name="Otsuki T."/>
            <person name="Ota T."/>
            <person name="Nishikawa T."/>
            <person name="Hayashi K."/>
            <person name="Suzuki Y."/>
            <person name="Yamamoto J."/>
            <person name="Wakamatsu A."/>
            <person name="Kimura K."/>
            <person name="Sakamoto K."/>
            <person name="Hatano N."/>
            <person name="Kawai Y."/>
            <person name="Ishii S."/>
            <person name="Saito K."/>
            <person name="Kojima S."/>
            <person name="Sugiyama T."/>
            <person name="Ono T."/>
            <person name="Okano K."/>
            <person name="Yoshikawa Y."/>
            <person name="Aotsuka S."/>
            <person name="Sasaki N."/>
            <person name="Hattori A."/>
            <person name="Okumura K."/>
            <person name="Nagai K."/>
            <person name="Sugano S."/>
            <person name="Isogai T."/>
        </authorList>
    </citation>
    <scope>NUCLEOTIDE SEQUENCE [LARGE SCALE MRNA] OF 182-410 (ISOFORM 1)</scope>
    <source>
        <tissue>Teratocarcinoma</tissue>
    </source>
</reference>
<reference key="5">
    <citation type="journal article" date="2008" name="Proc. Natl. Acad. Sci. U.S.A.">
        <title>A quantitative atlas of mitotic phosphorylation.</title>
        <authorList>
            <person name="Dephoure N."/>
            <person name="Zhou C."/>
            <person name="Villen J."/>
            <person name="Beausoleil S.A."/>
            <person name="Bakalarski C.E."/>
            <person name="Elledge S.J."/>
            <person name="Gygi S.P."/>
        </authorList>
    </citation>
    <scope>PHOSPHORYLATION [LARGE SCALE ANALYSIS] AT SER-363</scope>
    <scope>IDENTIFICATION BY MASS SPECTROMETRY [LARGE SCALE ANALYSIS]</scope>
    <source>
        <tissue>Cervix carcinoma</tissue>
    </source>
</reference>
<feature type="chain" id="PRO_0000071941" description="Solute carrier family 35 member E1">
    <location>
        <begin position="1"/>
        <end position="410"/>
    </location>
</feature>
<feature type="transmembrane region" description="Helical" evidence="2">
    <location>
        <begin position="50"/>
        <end position="70"/>
    </location>
</feature>
<feature type="transmembrane region" description="Helical" evidence="2">
    <location>
        <begin position="111"/>
        <end position="131"/>
    </location>
</feature>
<feature type="transmembrane region" description="Helical" evidence="2">
    <location>
        <begin position="133"/>
        <end position="153"/>
    </location>
</feature>
<feature type="transmembrane region" description="Helical" evidence="2">
    <location>
        <begin position="165"/>
        <end position="184"/>
    </location>
</feature>
<feature type="transmembrane region" description="Helical" evidence="2">
    <location>
        <begin position="188"/>
        <end position="207"/>
    </location>
</feature>
<feature type="transmembrane region" description="Helical" evidence="2">
    <location>
        <begin position="222"/>
        <end position="242"/>
    </location>
</feature>
<feature type="transmembrane region" description="Helical" evidence="2">
    <location>
        <begin position="252"/>
        <end position="274"/>
    </location>
</feature>
<feature type="transmembrane region" description="Helical" evidence="2">
    <location>
        <begin position="282"/>
        <end position="303"/>
    </location>
</feature>
<feature type="transmembrane region" description="Helical" evidence="2">
    <location>
        <begin position="312"/>
        <end position="332"/>
    </location>
</feature>
<feature type="modified residue" description="Phosphoserine" evidence="6">
    <location>
        <position position="363"/>
    </location>
</feature>
<feature type="splice variant" id="VSP_010139" description="In isoform 2." evidence="3">
    <location>
        <begin position="1"/>
        <end position="300"/>
    </location>
</feature>
<feature type="splice variant" id="VSP_031351" description="In isoform 3." evidence="4">
    <location>
        <begin position="1"/>
        <end position="156"/>
    </location>
</feature>
<feature type="splice variant" id="VSP_010140" description="In isoform 3." evidence="4">
    <original>TYVYQWPW</original>
    <variation>GLPSENVL</variation>
    <location>
        <begin position="253"/>
        <end position="260"/>
    </location>
</feature>
<feature type="splice variant" id="VSP_010141" description="In isoform 3." evidence="4">
    <location>
        <begin position="261"/>
        <end position="410"/>
    </location>
</feature>
<feature type="sequence conflict" description="In Ref. 1; CAE45863." evidence="5" ref="1">
    <original>D</original>
    <variation>V</variation>
    <location>
        <position position="242"/>
    </location>
</feature>
<feature type="sequence conflict" description="In Ref. 4; BAC11565." evidence="5" ref="4">
    <original>N</original>
    <variation>I</variation>
    <location>
        <position position="318"/>
    </location>
</feature>
<organism>
    <name type="scientific">Homo sapiens</name>
    <name type="common">Human</name>
    <dbReference type="NCBI Taxonomy" id="9606"/>
    <lineage>
        <taxon>Eukaryota</taxon>
        <taxon>Metazoa</taxon>
        <taxon>Chordata</taxon>
        <taxon>Craniata</taxon>
        <taxon>Vertebrata</taxon>
        <taxon>Euteleostomi</taxon>
        <taxon>Mammalia</taxon>
        <taxon>Eutheria</taxon>
        <taxon>Euarchontoglires</taxon>
        <taxon>Primates</taxon>
        <taxon>Haplorrhini</taxon>
        <taxon>Catarrhini</taxon>
        <taxon>Hominidae</taxon>
        <taxon>Homo</taxon>
    </lineage>
</organism>
<protein>
    <recommendedName>
        <fullName>Solute carrier family 35 member E1</fullName>
    </recommendedName>
</protein>
<evidence type="ECO:0000250" key="1"/>
<evidence type="ECO:0000255" key="2"/>
<evidence type="ECO:0000303" key="3">
    <source>
    </source>
</evidence>
<evidence type="ECO:0000303" key="4">
    <source>
    </source>
</evidence>
<evidence type="ECO:0000305" key="5"/>
<evidence type="ECO:0007744" key="6">
    <source>
    </source>
</evidence>
<proteinExistence type="evidence at protein level"/>
<sequence>MAAAAVGAGHGAGGPGAASSSGGAREGARVAALCLLWYALSAGGNVVNKVILSAFPFPVTVSLCHILALCAGLPPLLRAWRVPPAPPVSGPGPSPHPSSGPLLPPRFYPRYVLPLAFGKYFASVSAHVSIWKVPVSYAHTVKATMPIWVVLLSRIIMKEKQSTKVYLSLIPIISGVLLATVTELSFDMWGLVSALAATLCFSLQNIFSKKVLRDSRIHHLRLLNILGCHAVFFMIPTWVLVDLSAFLVSSDLTYVYQWPWTLLLLAVSGFCNFAQNVIAFSILNLVSPLSYSVANATKRIMVITVSLIMLRNPVTSTNVLGMMTAILGVFLYNKTKYDANQQARKHLLPVTTADLSSKERHRSPLEKPHNGLLFPQHGDYQYGRNNILTDHFQYSRQSYPNSYSLNRYDV</sequence>
<name>S35E1_HUMAN</name>
<dbReference type="EMBL" id="BX640756">
    <property type="protein sequence ID" value="CAE45863.1"/>
    <property type="molecule type" value="mRNA"/>
</dbReference>
<dbReference type="EMBL" id="BC062562">
    <property type="protein sequence ID" value="AAH62562.1"/>
    <property type="status" value="ALT_INIT"/>
    <property type="molecule type" value="mRNA"/>
</dbReference>
<dbReference type="EMBL" id="BC014557">
    <property type="protein sequence ID" value="AAH14557.1"/>
    <property type="status" value="ALT_FRAME"/>
    <property type="molecule type" value="mRNA"/>
</dbReference>
<dbReference type="EMBL" id="AK027699">
    <property type="protein sequence ID" value="BAB55306.1"/>
    <property type="status" value="ALT_INIT"/>
    <property type="molecule type" value="mRNA"/>
</dbReference>
<dbReference type="EMBL" id="AK027850">
    <property type="protein sequence ID" value="BAB55410.1"/>
    <property type="status" value="ALT_INIT"/>
    <property type="molecule type" value="mRNA"/>
</dbReference>
<dbReference type="EMBL" id="AK075355">
    <property type="protein sequence ID" value="BAC11565.1"/>
    <property type="status" value="ALT_INIT"/>
    <property type="molecule type" value="mRNA"/>
</dbReference>
<dbReference type="CCDS" id="CCDS12346.2">
    <molecule id="Q96K37-1"/>
</dbReference>
<dbReference type="RefSeq" id="NP_079157.3">
    <molecule id="Q96K37-1"/>
    <property type="nucleotide sequence ID" value="NM_024881.4"/>
</dbReference>
<dbReference type="SMR" id="Q96K37"/>
<dbReference type="BioGRID" id="123013">
    <property type="interactions" value="126"/>
</dbReference>
<dbReference type="FunCoup" id="Q96K37">
    <property type="interactions" value="1310"/>
</dbReference>
<dbReference type="IntAct" id="Q96K37">
    <property type="interactions" value="74"/>
</dbReference>
<dbReference type="MINT" id="Q96K37"/>
<dbReference type="STRING" id="9606.ENSP00000470652"/>
<dbReference type="TCDB" id="2.A.7.9.9">
    <property type="family name" value="the drug/metabolite transporter (dmt) superfamily"/>
</dbReference>
<dbReference type="iPTMnet" id="Q96K37"/>
<dbReference type="PhosphoSitePlus" id="Q96K37"/>
<dbReference type="SwissPalm" id="Q96K37"/>
<dbReference type="BioMuta" id="SLC35E1"/>
<dbReference type="DMDM" id="172045863"/>
<dbReference type="jPOST" id="Q96K37"/>
<dbReference type="MassIVE" id="Q96K37"/>
<dbReference type="PaxDb" id="9606-ENSP00000470652"/>
<dbReference type="PeptideAtlas" id="Q96K37"/>
<dbReference type="ProteomicsDB" id="77038">
    <molecule id="Q96K37-1"/>
</dbReference>
<dbReference type="ProteomicsDB" id="77039">
    <molecule id="Q96K37-2"/>
</dbReference>
<dbReference type="Pumba" id="Q96K37"/>
<dbReference type="Antibodypedia" id="3098">
    <property type="antibodies" value="37 antibodies from 11 providers"/>
</dbReference>
<dbReference type="DNASU" id="79939"/>
<dbReference type="Ensembl" id="ENST00000595753.6">
    <molecule id="Q96K37-1"/>
    <property type="protein sequence ID" value="ENSP00000470652.1"/>
    <property type="gene ID" value="ENSG00000127526.15"/>
</dbReference>
<dbReference type="GeneID" id="79939"/>
<dbReference type="KEGG" id="hsa:79939"/>
<dbReference type="MANE-Select" id="ENST00000595753.6">
    <property type="protein sequence ID" value="ENSP00000470652.1"/>
    <property type="RefSeq nucleotide sequence ID" value="NM_024881.5"/>
    <property type="RefSeq protein sequence ID" value="NP_079157.3"/>
</dbReference>
<dbReference type="UCSC" id="uc010xph.3">
    <molecule id="Q96K37-1"/>
    <property type="organism name" value="human"/>
</dbReference>
<dbReference type="AGR" id="HGNC:20803"/>
<dbReference type="CTD" id="79939"/>
<dbReference type="DisGeNET" id="79939"/>
<dbReference type="GeneCards" id="SLC35E1"/>
<dbReference type="HGNC" id="HGNC:20803">
    <property type="gene designation" value="SLC35E1"/>
</dbReference>
<dbReference type="HPA" id="ENSG00000127526">
    <property type="expression patterns" value="Low tissue specificity"/>
</dbReference>
<dbReference type="MIM" id="620337">
    <property type="type" value="gene"/>
</dbReference>
<dbReference type="neXtProt" id="NX_Q96K37"/>
<dbReference type="OpenTargets" id="ENSG00000127526"/>
<dbReference type="PharmGKB" id="PA134916810"/>
<dbReference type="VEuPathDB" id="HostDB:ENSG00000127526"/>
<dbReference type="eggNOG" id="KOG1441">
    <property type="taxonomic scope" value="Eukaryota"/>
</dbReference>
<dbReference type="GeneTree" id="ENSGT00940000159007"/>
<dbReference type="HOGENOM" id="CLU_019048_1_0_1"/>
<dbReference type="InParanoid" id="Q96K37"/>
<dbReference type="OMA" id="FWYTVSS"/>
<dbReference type="OrthoDB" id="6418713at2759"/>
<dbReference type="PAN-GO" id="Q96K37">
    <property type="GO annotations" value="2 GO annotations based on evolutionary models"/>
</dbReference>
<dbReference type="PhylomeDB" id="Q96K37"/>
<dbReference type="TreeFam" id="TF324822"/>
<dbReference type="PathwayCommons" id="Q96K37"/>
<dbReference type="SignaLink" id="Q96K37"/>
<dbReference type="BioGRID-ORCS" id="79939">
    <property type="hits" value="26 hits in 1161 CRISPR screens"/>
</dbReference>
<dbReference type="ChiTaRS" id="SLC35E1">
    <property type="organism name" value="human"/>
</dbReference>
<dbReference type="GenomeRNAi" id="79939"/>
<dbReference type="Pharos" id="Q96K37">
    <property type="development level" value="Tdark"/>
</dbReference>
<dbReference type="PRO" id="PR:Q96K37"/>
<dbReference type="Proteomes" id="UP000005640">
    <property type="component" value="Chromosome 19"/>
</dbReference>
<dbReference type="RNAct" id="Q96K37">
    <property type="molecule type" value="protein"/>
</dbReference>
<dbReference type="Bgee" id="ENSG00000127526">
    <property type="expression patterns" value="Expressed in renal medulla and 217 other cell types or tissues"/>
</dbReference>
<dbReference type="ExpressionAtlas" id="Q96K37">
    <property type="expression patterns" value="baseline and differential"/>
</dbReference>
<dbReference type="GO" id="GO:0005794">
    <property type="term" value="C:Golgi apparatus"/>
    <property type="evidence" value="ECO:0000314"/>
    <property type="project" value="HPA"/>
</dbReference>
<dbReference type="GO" id="GO:0016020">
    <property type="term" value="C:membrane"/>
    <property type="evidence" value="ECO:0007669"/>
    <property type="project" value="UniProtKB-SubCell"/>
</dbReference>
<dbReference type="GO" id="GO:0015297">
    <property type="term" value="F:antiporter activity"/>
    <property type="evidence" value="ECO:0000318"/>
    <property type="project" value="GO_Central"/>
</dbReference>
<dbReference type="GO" id="GO:0055085">
    <property type="term" value="P:transmembrane transport"/>
    <property type="evidence" value="ECO:0000318"/>
    <property type="project" value="GO_Central"/>
</dbReference>
<dbReference type="InterPro" id="IPR004853">
    <property type="entry name" value="Sugar_P_trans_dom"/>
</dbReference>
<dbReference type="InterPro" id="IPR050186">
    <property type="entry name" value="TPT_transporter"/>
</dbReference>
<dbReference type="PANTHER" id="PTHR11132">
    <property type="entry name" value="SOLUTE CARRIER FAMILY 35"/>
    <property type="match status" value="1"/>
</dbReference>
<dbReference type="Pfam" id="PF03151">
    <property type="entry name" value="TPT"/>
    <property type="match status" value="1"/>
</dbReference>
<dbReference type="SUPFAM" id="SSF103481">
    <property type="entry name" value="Multidrug resistance efflux transporter EmrE"/>
    <property type="match status" value="1"/>
</dbReference>